<name>TRMB_SYNJB</name>
<dbReference type="EC" id="2.1.1.33" evidence="2"/>
<dbReference type="EMBL" id="CP000240">
    <property type="protein sequence ID" value="ABD03112.1"/>
    <property type="molecule type" value="Genomic_DNA"/>
</dbReference>
<dbReference type="SMR" id="Q2JJQ0"/>
<dbReference type="STRING" id="321332.CYB_2166"/>
<dbReference type="KEGG" id="cyb:CYB_2166"/>
<dbReference type="eggNOG" id="COG0220">
    <property type="taxonomic scope" value="Bacteria"/>
</dbReference>
<dbReference type="HOGENOM" id="CLU_050910_1_3_3"/>
<dbReference type="OrthoDB" id="9802090at2"/>
<dbReference type="UniPathway" id="UPA00989"/>
<dbReference type="Proteomes" id="UP000001938">
    <property type="component" value="Chromosome"/>
</dbReference>
<dbReference type="GO" id="GO:0043527">
    <property type="term" value="C:tRNA methyltransferase complex"/>
    <property type="evidence" value="ECO:0007669"/>
    <property type="project" value="TreeGrafter"/>
</dbReference>
<dbReference type="GO" id="GO:0008176">
    <property type="term" value="F:tRNA (guanine(46)-N7)-methyltransferase activity"/>
    <property type="evidence" value="ECO:0007669"/>
    <property type="project" value="UniProtKB-UniRule"/>
</dbReference>
<dbReference type="CDD" id="cd02440">
    <property type="entry name" value="AdoMet_MTases"/>
    <property type="match status" value="1"/>
</dbReference>
<dbReference type="Gene3D" id="3.40.50.150">
    <property type="entry name" value="Vaccinia Virus protein VP39"/>
    <property type="match status" value="1"/>
</dbReference>
<dbReference type="HAMAP" id="MF_01057">
    <property type="entry name" value="tRNA_methyltr_TrmB"/>
    <property type="match status" value="1"/>
</dbReference>
<dbReference type="InterPro" id="IPR029063">
    <property type="entry name" value="SAM-dependent_MTases_sf"/>
</dbReference>
<dbReference type="InterPro" id="IPR003358">
    <property type="entry name" value="tRNA_(Gua-N-7)_MeTrfase_Trmb"/>
</dbReference>
<dbReference type="InterPro" id="IPR055361">
    <property type="entry name" value="tRNA_methyltr_TrmB_bact"/>
</dbReference>
<dbReference type="NCBIfam" id="TIGR00091">
    <property type="entry name" value="tRNA (guanosine(46)-N7)-methyltransferase TrmB"/>
    <property type="match status" value="1"/>
</dbReference>
<dbReference type="PANTHER" id="PTHR23417">
    <property type="entry name" value="3-DEOXY-D-MANNO-OCTULOSONIC-ACID TRANSFERASE/TRNA GUANINE-N 7 - -METHYLTRANSFERASE"/>
    <property type="match status" value="1"/>
</dbReference>
<dbReference type="PANTHER" id="PTHR23417:SF21">
    <property type="entry name" value="TRNA (GUANINE-N(7)-)-METHYLTRANSFERASE"/>
    <property type="match status" value="1"/>
</dbReference>
<dbReference type="Pfam" id="PF02390">
    <property type="entry name" value="Methyltransf_4"/>
    <property type="match status" value="1"/>
</dbReference>
<dbReference type="SUPFAM" id="SSF53335">
    <property type="entry name" value="S-adenosyl-L-methionine-dependent methyltransferases"/>
    <property type="match status" value="1"/>
</dbReference>
<dbReference type="PROSITE" id="PS51625">
    <property type="entry name" value="SAM_MT_TRMB"/>
    <property type="match status" value="1"/>
</dbReference>
<protein>
    <recommendedName>
        <fullName evidence="2">tRNA (guanine-N(7)-)-methyltransferase</fullName>
        <ecNumber evidence="2">2.1.1.33</ecNumber>
    </recommendedName>
    <alternativeName>
        <fullName evidence="2">tRNA (guanine(46)-N(7))-methyltransferase</fullName>
    </alternativeName>
    <alternativeName>
        <fullName evidence="2">tRNA(m7G46)-methyltransferase</fullName>
    </alternativeName>
</protein>
<gene>
    <name evidence="2" type="primary">trmB</name>
    <name type="ordered locus">CYB_2166</name>
</gene>
<comment type="function">
    <text evidence="2">Catalyzes the formation of N(7)-methylguanine at position 46 (m7G46) in tRNA.</text>
</comment>
<comment type="catalytic activity">
    <reaction evidence="2">
        <text>guanosine(46) in tRNA + S-adenosyl-L-methionine = N(7)-methylguanosine(46) in tRNA + S-adenosyl-L-homocysteine</text>
        <dbReference type="Rhea" id="RHEA:42708"/>
        <dbReference type="Rhea" id="RHEA-COMP:10188"/>
        <dbReference type="Rhea" id="RHEA-COMP:10189"/>
        <dbReference type="ChEBI" id="CHEBI:57856"/>
        <dbReference type="ChEBI" id="CHEBI:59789"/>
        <dbReference type="ChEBI" id="CHEBI:74269"/>
        <dbReference type="ChEBI" id="CHEBI:74480"/>
        <dbReference type="EC" id="2.1.1.33"/>
    </reaction>
</comment>
<comment type="pathway">
    <text evidence="2">tRNA modification; N(7)-methylguanine-tRNA biosynthesis.</text>
</comment>
<comment type="similarity">
    <text evidence="2">Belongs to the class I-like SAM-binding methyltransferase superfamily. TrmB family.</text>
</comment>
<proteinExistence type="inferred from homology"/>
<accession>Q2JJQ0</accession>
<reference key="1">
    <citation type="journal article" date="2007" name="ISME J.">
        <title>Population level functional diversity in a microbial community revealed by comparative genomic and metagenomic analyses.</title>
        <authorList>
            <person name="Bhaya D."/>
            <person name="Grossman A.R."/>
            <person name="Steunou A.-S."/>
            <person name="Khuri N."/>
            <person name="Cohan F.M."/>
            <person name="Hamamura N."/>
            <person name="Melendrez M.C."/>
            <person name="Bateson M.M."/>
            <person name="Ward D.M."/>
            <person name="Heidelberg J.F."/>
        </authorList>
    </citation>
    <scope>NUCLEOTIDE SEQUENCE [LARGE SCALE GENOMIC DNA]</scope>
    <source>
        <strain>JA-2-3B'a(2-13)</strain>
    </source>
</reference>
<organism>
    <name type="scientific">Synechococcus sp. (strain JA-2-3B'a(2-13))</name>
    <name type="common">Cyanobacteria bacterium Yellowstone B-Prime</name>
    <dbReference type="NCBI Taxonomy" id="321332"/>
    <lineage>
        <taxon>Bacteria</taxon>
        <taxon>Bacillati</taxon>
        <taxon>Cyanobacteriota</taxon>
        <taxon>Cyanophyceae</taxon>
        <taxon>Synechococcales</taxon>
        <taxon>Synechococcaceae</taxon>
        <taxon>Synechococcus</taxon>
    </lineage>
</organism>
<evidence type="ECO:0000250" key="1"/>
<evidence type="ECO:0000255" key="2">
    <source>
        <dbReference type="HAMAP-Rule" id="MF_01057"/>
    </source>
</evidence>
<evidence type="ECO:0000256" key="3">
    <source>
        <dbReference type="SAM" id="MobiDB-lite"/>
    </source>
</evidence>
<sequence>MEAEVQQGQQSPEGQLEKRPPSPPWAGIPLQRGLGHRVRQHVNPLQAQYQQPAPPPHWERVYRRLGQPFHLDIGTGSGRFLLRIAQEQPDWNFLGVEIRQALVERANAWRDELGLDNVHFLFANINVSLRHLFAPGDLSRVTILFPDPWFKKRHHKRRIVQPQLVADLALLLRPGSPVFLQSDIQEVAEEMAARFLEHPQFWDPHQGPLDSNPLGIPTEREWQCLQLDLPIYRYWLERR</sequence>
<feature type="chain" id="PRO_0000288245" description="tRNA (guanine-N(7)-)-methyltransferase">
    <location>
        <begin position="1"/>
        <end position="239"/>
    </location>
</feature>
<feature type="region of interest" description="Disordered" evidence="3">
    <location>
        <begin position="1"/>
        <end position="30"/>
    </location>
</feature>
<feature type="compositionally biased region" description="Polar residues" evidence="3">
    <location>
        <begin position="1"/>
        <end position="13"/>
    </location>
</feature>
<feature type="active site" evidence="1">
    <location>
        <position position="147"/>
    </location>
</feature>
<feature type="binding site" evidence="2">
    <location>
        <position position="72"/>
    </location>
    <ligand>
        <name>S-adenosyl-L-methionine</name>
        <dbReference type="ChEBI" id="CHEBI:59789"/>
    </ligand>
</feature>
<feature type="binding site" evidence="2">
    <location>
        <position position="97"/>
    </location>
    <ligand>
        <name>S-adenosyl-L-methionine</name>
        <dbReference type="ChEBI" id="CHEBI:59789"/>
    </ligand>
</feature>
<feature type="binding site" evidence="2">
    <location>
        <position position="124"/>
    </location>
    <ligand>
        <name>S-adenosyl-L-methionine</name>
        <dbReference type="ChEBI" id="CHEBI:59789"/>
    </ligand>
</feature>
<feature type="binding site" evidence="2">
    <location>
        <position position="147"/>
    </location>
    <ligand>
        <name>S-adenosyl-L-methionine</name>
        <dbReference type="ChEBI" id="CHEBI:59789"/>
    </ligand>
</feature>
<feature type="binding site" evidence="2">
    <location>
        <position position="151"/>
    </location>
    <ligand>
        <name>substrate</name>
    </ligand>
</feature>
<feature type="binding site" evidence="2">
    <location>
        <position position="183"/>
    </location>
    <ligand>
        <name>substrate</name>
    </ligand>
</feature>
<keyword id="KW-0489">Methyltransferase</keyword>
<keyword id="KW-1185">Reference proteome</keyword>
<keyword id="KW-0949">S-adenosyl-L-methionine</keyword>
<keyword id="KW-0808">Transferase</keyword>
<keyword id="KW-0819">tRNA processing</keyword>